<sequence length="85" mass="9859">MKKILFSMFYSILVGEEPDSVFLKKEGKQNQVKMIWVAPSSCAKDLTISEGTGATFLFNFHSRVSYLFPRPFLRPRNMKWTNSFS</sequence>
<evidence type="ECO:0000305" key="1"/>
<reference key="1">
    <citation type="journal article" date="1989" name="Mol. Gen. Genet.">
        <title>The complete sequence of the rice (Oryza sativa) chloroplast genome: intermolecular recombination between distinct tRNA genes accounts for a major plastid DNA inversion during the evolution of the cereals.</title>
        <authorList>
            <person name="Hiratsuka J."/>
            <person name="Shimada H."/>
            <person name="Whittier R."/>
            <person name="Ishibashi T."/>
            <person name="Sakamoto M."/>
            <person name="Mori M."/>
            <person name="Kondo C."/>
            <person name="Honji Y."/>
            <person name="Sun C.-R."/>
            <person name="Meng B.-Y."/>
            <person name="Li Y.-Q."/>
            <person name="Kanno A."/>
            <person name="Nishizawa Y."/>
            <person name="Hirai A."/>
            <person name="Shinozaki K."/>
            <person name="Sugiura M."/>
        </authorList>
    </citation>
    <scope>NUCLEOTIDE SEQUENCE [LARGE SCALE GENOMIC DNA]</scope>
    <source>
        <strain>cv. Nipponbare</strain>
    </source>
</reference>
<reference key="2">
    <citation type="journal article" date="2004" name="Plant Physiol.">
        <title>A comparison of rice chloroplast genomes.</title>
        <authorList>
            <person name="Tang J."/>
            <person name="Xia H."/>
            <person name="Cao M."/>
            <person name="Zhang X."/>
            <person name="Zeng W."/>
            <person name="Hu S."/>
            <person name="Tong W."/>
            <person name="Wang J."/>
            <person name="Wang J."/>
            <person name="Yu J."/>
            <person name="Yang H."/>
            <person name="Zhu L."/>
        </authorList>
    </citation>
    <scope>NUCLEOTIDE SEQUENCE [LARGE SCALE GENOMIC DNA]</scope>
    <source>
        <strain>cv. Nipponbare</strain>
    </source>
</reference>
<feature type="chain" id="PRO_0000277366" description="Uncharacterized protein ycf76">
    <location>
        <begin position="1"/>
        <end position="85"/>
    </location>
</feature>
<protein>
    <recommendedName>
        <fullName>Uncharacterized protein ycf76</fullName>
    </recommendedName>
    <alternativeName>
        <fullName>ORF85</fullName>
    </alternativeName>
</protein>
<geneLocation type="chloroplast"/>
<proteinExistence type="inferred from homology"/>
<keyword id="KW-0150">Chloroplast</keyword>
<keyword id="KW-0934">Plastid</keyword>
<keyword id="KW-1185">Reference proteome</keyword>
<gene>
    <name type="primary">ycf76-A</name>
    <name type="ordered locus">LOC_Osp1g00830</name>
</gene>
<gene>
    <name type="primary">ycf76-B</name>
</gene>
<dbReference type="EMBL" id="X15901">
    <property type="protein sequence ID" value="CAA33916.1"/>
    <property type="molecule type" value="Genomic_DNA"/>
</dbReference>
<dbReference type="EMBL" id="X15901">
    <property type="protein sequence ID" value="CAA33944.1"/>
    <property type="status" value="ALT_INIT"/>
    <property type="molecule type" value="Genomic_DNA"/>
</dbReference>
<dbReference type="EMBL" id="AY522330">
    <property type="status" value="NOT_ANNOTATED_CDS"/>
    <property type="molecule type" value="Genomic_DNA"/>
</dbReference>
<dbReference type="PIR" id="JQ0278">
    <property type="entry name" value="JQ0278"/>
</dbReference>
<dbReference type="RefSeq" id="NP_039435.1">
    <property type="nucleotide sequence ID" value="NC_001320.1"/>
</dbReference>
<dbReference type="RefSeq" id="NP_039455.1">
    <property type="nucleotide sequence ID" value="NC_001320.1"/>
</dbReference>
<dbReference type="FunCoup" id="Q32766">
    <property type="interactions" value="2"/>
</dbReference>
<dbReference type="STRING" id="39947.Q32766"/>
<dbReference type="PaxDb" id="39947-Q32766"/>
<dbReference type="KEGG" id="dosa:CAA33916.1"/>
<dbReference type="KEGG" id="dosa:CAA33944.1"/>
<dbReference type="KEGG" id="osa:3131481"/>
<dbReference type="KEGG" id="osa:3131493"/>
<dbReference type="InParanoid" id="Q32766"/>
<dbReference type="OrthoDB" id="587411at2759"/>
<dbReference type="Proteomes" id="UP000059680">
    <property type="component" value="Chloroplast"/>
</dbReference>
<dbReference type="GO" id="GO:0009507">
    <property type="term" value="C:chloroplast"/>
    <property type="evidence" value="ECO:0007669"/>
    <property type="project" value="UniProtKB-SubCell"/>
</dbReference>
<dbReference type="GO" id="GO:0009536">
    <property type="term" value="C:plastid"/>
    <property type="evidence" value="ECO:0000250"/>
    <property type="project" value="Gramene"/>
</dbReference>
<organism>
    <name type="scientific">Oryza sativa subsp. japonica</name>
    <name type="common">Rice</name>
    <dbReference type="NCBI Taxonomy" id="39947"/>
    <lineage>
        <taxon>Eukaryota</taxon>
        <taxon>Viridiplantae</taxon>
        <taxon>Streptophyta</taxon>
        <taxon>Embryophyta</taxon>
        <taxon>Tracheophyta</taxon>
        <taxon>Spermatophyta</taxon>
        <taxon>Magnoliopsida</taxon>
        <taxon>Liliopsida</taxon>
        <taxon>Poales</taxon>
        <taxon>Poaceae</taxon>
        <taxon>BOP clade</taxon>
        <taxon>Oryzoideae</taxon>
        <taxon>Oryzeae</taxon>
        <taxon>Oryzinae</taxon>
        <taxon>Oryza</taxon>
        <taxon>Oryza sativa</taxon>
    </lineage>
</organism>
<accession>Q32766</accession>
<accession>Q32764</accession>
<accession>Q7GEY0</accession>
<name>YCF76_ORYSJ</name>
<comment type="subcellular location">
    <subcellularLocation>
        <location>Plastid</location>
        <location>Chloroplast</location>
    </subcellularLocation>
</comment>
<comment type="similarity">
    <text evidence="1">Belongs to the ycf76 family.</text>
</comment>
<comment type="sequence caution" evidence="1">
    <conflict type="frameshift">
        <sequence resource="EMBL" id="AY522330"/>
    </conflict>
</comment>
<comment type="sequence caution" evidence="1">
    <conflict type="erroneous initiation">
        <sequence resource="EMBL-CDS" id="CAA33944"/>
    </conflict>
</comment>